<name>T2C9_CITFR</name>
<reference key="1">
    <citation type="journal article" date="1994" name="Gene">
        <title>Cloning and analysis of translational control for genes encoding the Cfr9I restriction-modification system.</title>
        <authorList>
            <person name="Lubys A."/>
            <person name="Menkevicius S."/>
            <person name="Timinskas A."/>
            <person name="Butkus V."/>
            <person name="Janulaitis A."/>
        </authorList>
    </citation>
    <scope>NUCLEOTIDE SEQUENCE [GENOMIC DNA]</scope>
    <scope>PROTEIN SEQUENCE OF 2-5</scope>
    <scope>FUNCTION</scope>
    <source>
        <strain>RFL9</strain>
    </source>
</reference>
<reference key="2">
    <citation type="journal article" date="2003" name="Nucleic Acids Res.">
        <title>A nomenclature for restriction enzymes, DNA methyltransferases, homing endonucleases and their genes.</title>
        <authorList>
            <person name="Roberts R.J."/>
            <person name="Belfort M."/>
            <person name="Bestor T."/>
            <person name="Bhagwat A.S."/>
            <person name="Bickle T.A."/>
            <person name="Bitinaite J."/>
            <person name="Blumenthal R.M."/>
            <person name="Degtyarev S.K."/>
            <person name="Dryden D.T."/>
            <person name="Dybvig K."/>
            <person name="Firman K."/>
            <person name="Gromova E.S."/>
            <person name="Gumport R.I."/>
            <person name="Halford S.E."/>
            <person name="Hattman S."/>
            <person name="Heitman J."/>
            <person name="Hornby D.P."/>
            <person name="Janulaitis A."/>
            <person name="Jeltsch A."/>
            <person name="Josephsen J."/>
            <person name="Kiss A."/>
            <person name="Klaenhammer T.R."/>
            <person name="Kobayashi I."/>
            <person name="Kong H."/>
            <person name="Krueger D.H."/>
            <person name="Lacks S."/>
            <person name="Marinus M.G."/>
            <person name="Miyahara M."/>
            <person name="Morgan R.D."/>
            <person name="Murray N.E."/>
            <person name="Nagaraja V."/>
            <person name="Piekarowicz A."/>
            <person name="Pingoud A."/>
            <person name="Raleigh E."/>
            <person name="Rao D.N."/>
            <person name="Reich N."/>
            <person name="Repin V.E."/>
            <person name="Selker E.U."/>
            <person name="Shaw P.C."/>
            <person name="Stein D.C."/>
            <person name="Stoddard B.L."/>
            <person name="Szybalski W."/>
            <person name="Trautner T.A."/>
            <person name="Van Etten J.L."/>
            <person name="Vitor J.M."/>
            <person name="Wilson G.G."/>
            <person name="Xu S.Y."/>
        </authorList>
    </citation>
    <scope>NOMENCLATURE</scope>
    <scope>SUBTYPES</scope>
</reference>
<evidence type="ECO:0000269" key="1">
    <source>
    </source>
</evidence>
<evidence type="ECO:0000303" key="2">
    <source>
    </source>
</evidence>
<evidence type="ECO:0000303" key="3">
    <source>
    </source>
</evidence>
<evidence type="ECO:0000305" key="4"/>
<evidence type="ECO:0000305" key="5">
    <source>
    </source>
</evidence>
<accession>Q60132</accession>
<gene>
    <name type="primary">cfr9IR</name>
</gene>
<keyword id="KW-0903">Direct protein sequencing</keyword>
<keyword id="KW-0255">Endonuclease</keyword>
<keyword id="KW-0378">Hydrolase</keyword>
<keyword id="KW-0460">Magnesium</keyword>
<keyword id="KW-0540">Nuclease</keyword>
<keyword id="KW-0680">Restriction system</keyword>
<feature type="initiator methionine" description="Removed" evidence="1">
    <location>
        <position position="1"/>
    </location>
</feature>
<feature type="chain" id="PRO_0000077294" description="Type II restriction enzyme Cfr9I">
    <location>
        <begin position="2"/>
        <end position="330"/>
    </location>
</feature>
<protein>
    <recommendedName>
        <fullName evidence="2">Type II restriction enzyme Cfr9I</fullName>
        <shortName evidence="3">R.Cfr9I</shortName>
        <ecNumber>3.1.21.4</ecNumber>
    </recommendedName>
    <alternativeName>
        <fullName>Endonuclease Cfr9I</fullName>
    </alternativeName>
    <alternativeName>
        <fullName>Type-2 restriction enzyme Cfr9I</fullName>
    </alternativeName>
</protein>
<sequence length="330" mass="36806">MTNKIVFPEPKQQVDFAFSLKRFRGIYLQNALLETVRDMDIVALDTQLAEYVNKADLATLATYGLRAELLFPVPVLLETNPFLLGYYRLLMGYSQKEFYGKDKGFNAGCFKSMEVKGNIGKVAKPKISELCHAFCSVASSLLQGVGPLRISRELLDDLTLLTVGPQLRGGANNQRGADGIVLVFEIIKEIVSHAVAEVRENAIEVNSATGRNVLIEFAPDPDIIIREEMSLDNYRNVVAIEVKSGTDVSNIHNRIGEAEKSHQKARGHGYTECWTVVNVSRLDMDKARKESPSTNRFYSITDLSLREGEQYEDFRRRVLSLTAISAAPTP</sequence>
<dbReference type="EC" id="3.1.21.4"/>
<dbReference type="EMBL" id="X17022">
    <property type="protein sequence ID" value="CAA34888.1"/>
    <property type="molecule type" value="Genomic_DNA"/>
</dbReference>
<dbReference type="EMBL" id="X74517">
    <property type="protein sequence ID" value="CAA52628.1"/>
    <property type="molecule type" value="Genomic_DNA"/>
</dbReference>
<dbReference type="PIR" id="I40700">
    <property type="entry name" value="I40700"/>
</dbReference>
<dbReference type="REBASE" id="699">
    <property type="entry name" value="Cfr9I"/>
</dbReference>
<dbReference type="PRO" id="PR:Q60132"/>
<dbReference type="GO" id="GO:0003677">
    <property type="term" value="F:DNA binding"/>
    <property type="evidence" value="ECO:0007669"/>
    <property type="project" value="InterPro"/>
</dbReference>
<dbReference type="GO" id="GO:0000287">
    <property type="term" value="F:magnesium ion binding"/>
    <property type="evidence" value="ECO:0007669"/>
    <property type="project" value="InterPro"/>
</dbReference>
<dbReference type="GO" id="GO:0009036">
    <property type="term" value="F:type II site-specific deoxyribonuclease activity"/>
    <property type="evidence" value="ECO:0007669"/>
    <property type="project" value="UniProtKB-EC"/>
</dbReference>
<dbReference type="GO" id="GO:0009307">
    <property type="term" value="P:DNA restriction-modification system"/>
    <property type="evidence" value="ECO:0007669"/>
    <property type="project" value="UniProtKB-KW"/>
</dbReference>
<dbReference type="InterPro" id="IPR019071">
    <property type="entry name" value="Restrct_endonuc_II_XcyI"/>
</dbReference>
<dbReference type="Pfam" id="PF09571">
    <property type="entry name" value="RE_XcyI"/>
    <property type="match status" value="1"/>
</dbReference>
<comment type="function">
    <text evidence="2 5">An E and P subtype restriction enzyme that recognizes the double-stranded sequence 5'-CCCGGG-3' and cleaves after C-1.</text>
</comment>
<comment type="catalytic activity">
    <reaction>
        <text>Endonucleolytic cleavage of DNA to give specific double-stranded fragments with terminal 5'-phosphates.</text>
        <dbReference type="EC" id="3.1.21.4"/>
    </reaction>
</comment>
<comment type="cofactor">
    <cofactor>
        <name>Mg(2+)</name>
        <dbReference type="ChEBI" id="CHEBI:18420"/>
    </cofactor>
</comment>
<comment type="similarity">
    <text evidence="4">Belongs to the XcyI type II restriction endonuclease family.</text>
</comment>
<organism>
    <name type="scientific">Citrobacter freundii</name>
    <dbReference type="NCBI Taxonomy" id="546"/>
    <lineage>
        <taxon>Bacteria</taxon>
        <taxon>Pseudomonadati</taxon>
        <taxon>Pseudomonadota</taxon>
        <taxon>Gammaproteobacteria</taxon>
        <taxon>Enterobacterales</taxon>
        <taxon>Enterobacteriaceae</taxon>
        <taxon>Citrobacter</taxon>
        <taxon>Citrobacter freundii complex</taxon>
    </lineage>
</organism>
<proteinExistence type="evidence at protein level"/>